<feature type="signal peptide">
    <location>
        <begin position="1"/>
        <end position="19"/>
    </location>
</feature>
<feature type="chain" id="PRO_0000040993" description="Glycoprotein">
    <location>
        <begin position="20"/>
        <end position="524"/>
    </location>
</feature>
<feature type="topological domain" description="Virion surface" evidence="3">
    <location>
        <begin position="20"/>
        <end position="459"/>
    </location>
</feature>
<feature type="transmembrane region" description="Helical" evidence="3">
    <location>
        <begin position="460"/>
        <end position="480"/>
    </location>
</feature>
<feature type="topological domain" description="Intravirion" evidence="3">
    <location>
        <begin position="481"/>
        <end position="524"/>
    </location>
</feature>
<feature type="lipid moiety-binding region" description="S-palmitoyl cysteine; by host" evidence="1">
    <location>
        <position position="480"/>
    </location>
</feature>
<feature type="glycosylation site" description="N-linked (GlcNAc...) asparagine; by host" evidence="4">
    <location>
        <position position="56"/>
    </location>
</feature>
<feature type="glycosylation site" description="N-linked (GlcNAc...) asparagine; by host" evidence="4">
    <location>
        <position position="266"/>
    </location>
</feature>
<feature type="glycosylation site" description="N-linked (GlcNAc...) asparagine; by host" evidence="4">
    <location>
        <position position="338"/>
    </location>
</feature>
<feature type="disulfide bond" evidence="2">
    <location>
        <begin position="43"/>
        <end position="302"/>
    </location>
</feature>
<feature type="disulfide bond" evidence="2">
    <location>
        <begin position="54"/>
        <end position="226"/>
    </location>
</feature>
<feature type="disulfide bond" evidence="2">
    <location>
        <begin position="80"/>
        <end position="113"/>
    </location>
</feature>
<feature type="disulfide bond" evidence="2">
    <location>
        <begin position="178"/>
        <end position="188"/>
    </location>
</feature>
<feature type="disulfide bond" evidence="2">
    <location>
        <begin position="208"/>
        <end position="247"/>
    </location>
</feature>
<feature type="disulfide bond" evidence="2">
    <location>
        <begin position="242"/>
        <end position="271"/>
    </location>
</feature>
<feature type="disulfide bond" evidence="2">
    <location>
        <begin position="363"/>
        <end position="370"/>
    </location>
</feature>
<feature type="sequence variant" description="In strain: ERA 2007.">
    <original>L</original>
    <variation>P</variation>
    <location>
        <position position="27"/>
    </location>
</feature>
<feature type="sequence variant" description="In strain: CVS-11, RV194-2[F3] and RV231-22.">
    <original>T</original>
    <variation>I</variation>
    <location>
        <position position="55"/>
    </location>
</feature>
<feature type="sequence variant" description="In strain: RV194-2[F3].">
    <original>K</original>
    <variation>N</variation>
    <location>
        <position position="177"/>
    </location>
</feature>
<feature type="sequence variant" description="In strain: RV231-22.">
    <original>K</original>
    <variation>E</variation>
    <location>
        <position position="217"/>
    </location>
</feature>
<feature type="sequence variant" description="In strain: CVS-11, RV194-2[F3] and RV231-22.">
    <original>KGSE</original>
    <variation>NGNK</variation>
    <location>
        <begin position="221"/>
        <end position="224"/>
    </location>
</feature>
<feature type="sequence variant" description="In strain: RV194-2[F3].">
    <original>R</original>
    <variation>Q</variation>
    <location>
        <position position="352"/>
    </location>
</feature>
<feature type="strand" evidence="7">
    <location>
        <begin position="521"/>
        <end position="523"/>
    </location>
</feature>
<evidence type="ECO:0000250" key="1"/>
<evidence type="ECO:0000250" key="2">
    <source>
        <dbReference type="UniProtKB" id="P08667"/>
    </source>
</evidence>
<evidence type="ECO:0000255" key="3"/>
<evidence type="ECO:0000269" key="4">
    <source>
    </source>
</evidence>
<evidence type="ECO:0000269" key="5">
    <source>
    </source>
</evidence>
<evidence type="ECO:0000305" key="6"/>
<evidence type="ECO:0007829" key="7">
    <source>
        <dbReference type="PDB" id="3NFK"/>
    </source>
</evidence>
<organism>
    <name type="scientific">Rabies virus (strain ERA)</name>
    <name type="common">RABV</name>
    <dbReference type="NCBI Taxonomy" id="11295"/>
    <lineage>
        <taxon>Viruses</taxon>
        <taxon>Riboviria</taxon>
        <taxon>Orthornavirae</taxon>
        <taxon>Negarnaviricota</taxon>
        <taxon>Haploviricotina</taxon>
        <taxon>Monjiviricetes</taxon>
        <taxon>Mononegavirales</taxon>
        <taxon>Rhabdoviridae</taxon>
        <taxon>Alpharhabdovirinae</taxon>
        <taxon>Lyssavirus</taxon>
        <taxon>Lyssavirus rabies</taxon>
    </lineage>
</organism>
<protein>
    <recommendedName>
        <fullName>Glycoprotein</fullName>
    </recommendedName>
</protein>
<sequence length="524" mass="58658">MVPQALLFVPLLVFPLCFGKFPIYTILDKLGPWSPIDIHHLSCPNNLVVEDEGCTNLSGFSYMELKVGYILAIKMNGFTCTGVVTEAETYTNFVGYVTTTFKRKHFRPTPDACRAAYNWKMAGDPRYEESLHNPYPDYRWLRTVKTTKESLVIISPSVADLDPYDRSLHSRVFPSGKCSGVAVSSTYCSTNHDYTIWMPENPRLGMSCDIFTNSRGKRASKGSETCGFVDERGLYKSLKGACKLKLCGVLGLRLMDGTWVAMQTSNETKWCPPDQLVNLHDFRSDEIEHLVVEELVRKREECLDALESIMTTKSVSFRRLSHLRKLVPGFGKAYTIFNKTLMEADAHYKSVRTWNEILPSKGCLRVGGRCHPHVNGVFFNGIILGPDGNVLIPEMQSSLLQQHMELLESSVIPLVHPLADPSTVFKDGDEAEDFVEVHLPDVHNQVSGVDLGLPNWGKYVLLSAGALTALMLIIFLMTCCRRVNRSEPTQHNLRGTGREVSVTPQSGKIISSWESHKSGGETRL</sequence>
<organismHost>
    <name type="scientific">Homo sapiens</name>
    <name type="common">Human</name>
    <dbReference type="NCBI Taxonomy" id="9606"/>
</organismHost>
<organismHost>
    <name type="scientific">Mammalia</name>
    <dbReference type="NCBI Taxonomy" id="40674"/>
</organismHost>
<dbReference type="EMBL" id="J02293">
    <property type="protein sequence ID" value="AAA47204.1"/>
    <property type="status" value="ALT_SEQ"/>
    <property type="molecule type" value="Genomic_RNA"/>
</dbReference>
<dbReference type="EMBL" id="M38452">
    <property type="protein sequence ID" value="AAA47209.1"/>
    <property type="molecule type" value="Genomic_RNA"/>
</dbReference>
<dbReference type="EMBL" id="EF206707">
    <property type="protein sequence ID" value="ABN11294.1"/>
    <property type="molecule type" value="Genomic_RNA"/>
</dbReference>
<dbReference type="EMBL" id="AH002403">
    <property type="protein sequence ID" value="AAA47191.1"/>
    <property type="molecule type" value="Genomic_RNA"/>
</dbReference>
<dbReference type="EMBL" id="AH002403">
    <property type="protein sequence ID" value="AAA47192.1"/>
    <property type="molecule type" value="Genomic_RNA"/>
</dbReference>
<dbReference type="EMBL" id="AH002403">
    <property type="protein sequence ID" value="AAA47193.1"/>
    <property type="molecule type" value="Genomic_RNA"/>
</dbReference>
<dbReference type="EMBL" id="AH002403">
    <property type="protein sequence ID" value="AAA47194.1"/>
    <property type="molecule type" value="Genomic_RNA"/>
</dbReference>
<dbReference type="EMBL" id="AH002404">
    <property type="protein sequence ID" value="AAA47195.1"/>
    <property type="molecule type" value="Genomic_RNA"/>
</dbReference>
<dbReference type="EMBL" id="AH002404">
    <property type="protein sequence ID" value="AAA47196.1"/>
    <property type="molecule type" value="Genomic_RNA"/>
</dbReference>
<dbReference type="EMBL" id="AH002404">
    <property type="protein sequence ID" value="AAA47197.1"/>
    <property type="molecule type" value="Genomic_RNA"/>
</dbReference>
<dbReference type="EMBL" id="AH002404">
    <property type="protein sequence ID" value="AAA47198.1"/>
    <property type="molecule type" value="Genomic_RNA"/>
</dbReference>
<dbReference type="EMBL" id="AH002405">
    <property type="protein sequence ID" value="AAA47205.1"/>
    <property type="molecule type" value="Genomic_RNA"/>
</dbReference>
<dbReference type="EMBL" id="AH002405">
    <property type="protein sequence ID" value="AAA47206.1"/>
    <property type="molecule type" value="Genomic_RNA"/>
</dbReference>
<dbReference type="EMBL" id="AH002405">
    <property type="protein sequence ID" value="AAA47207.1"/>
    <property type="molecule type" value="Genomic_RNA"/>
</dbReference>
<dbReference type="EMBL" id="AH002405">
    <property type="protein sequence ID" value="AAA47208.1"/>
    <property type="molecule type" value="Genomic_RNA"/>
</dbReference>
<dbReference type="PIR" id="A04121">
    <property type="entry name" value="VGVNG"/>
</dbReference>
<dbReference type="PDB" id="3NFK">
    <property type="method" value="X-ray"/>
    <property type="resolution" value="1.43 A"/>
    <property type="chains" value="C/D=512-524"/>
</dbReference>
<dbReference type="PDBsum" id="3NFK"/>
<dbReference type="SMR" id="P03524"/>
<dbReference type="ELM" id="P03524"/>
<dbReference type="ChEMBL" id="CHEMBL3856167"/>
<dbReference type="GlyCosmos" id="P03524">
    <property type="glycosylation" value="3 sites, No reported glycans"/>
</dbReference>
<dbReference type="iPTMnet" id="P03524"/>
<dbReference type="EvolutionaryTrace" id="P03524"/>
<dbReference type="Proteomes" id="UP000008619">
    <property type="component" value="Genome"/>
</dbReference>
<dbReference type="GO" id="GO:0016020">
    <property type="term" value="C:membrane"/>
    <property type="evidence" value="ECO:0007669"/>
    <property type="project" value="UniProtKB-KW"/>
</dbReference>
<dbReference type="GO" id="GO:0019031">
    <property type="term" value="C:viral envelope"/>
    <property type="evidence" value="ECO:0007669"/>
    <property type="project" value="UniProtKB-KW"/>
</dbReference>
<dbReference type="GO" id="GO:0036338">
    <property type="term" value="C:viral membrane"/>
    <property type="evidence" value="ECO:0000250"/>
    <property type="project" value="UniProtKB"/>
</dbReference>
<dbReference type="GO" id="GO:0055036">
    <property type="term" value="C:virion membrane"/>
    <property type="evidence" value="ECO:0007669"/>
    <property type="project" value="UniProtKB-SubCell"/>
</dbReference>
<dbReference type="GO" id="GO:0098670">
    <property type="term" value="P:entry receptor-mediated virion attachment to host cell"/>
    <property type="evidence" value="ECO:0000250"/>
    <property type="project" value="UniProtKB"/>
</dbReference>
<dbReference type="GO" id="GO:0039654">
    <property type="term" value="P:fusion of virus membrane with host endosome membrane"/>
    <property type="evidence" value="ECO:0000250"/>
    <property type="project" value="UniProtKB"/>
</dbReference>
<dbReference type="Gene3D" id="2.30.29.130">
    <property type="match status" value="1"/>
</dbReference>
<dbReference type="InterPro" id="IPR055448">
    <property type="entry name" value="PH_Rhabdo_glycop"/>
</dbReference>
<dbReference type="InterPro" id="IPR055447">
    <property type="entry name" value="Rhabdo_glycop_CD"/>
</dbReference>
<dbReference type="InterPro" id="IPR001903">
    <property type="entry name" value="Rhabdo_glycop_FD"/>
</dbReference>
<dbReference type="Pfam" id="PF24834">
    <property type="entry name" value="PH_Rhabdo_glycop"/>
    <property type="match status" value="1"/>
</dbReference>
<dbReference type="Pfam" id="PF24833">
    <property type="entry name" value="Rhabdo_glycop_CD"/>
    <property type="match status" value="1"/>
</dbReference>
<dbReference type="Pfam" id="PF00974">
    <property type="entry name" value="Rhabdo_glycop_FD"/>
    <property type="match status" value="1"/>
</dbReference>
<dbReference type="SUPFAM" id="SSF161008">
    <property type="entry name" value="Viral glycoprotein ectodomain-like"/>
    <property type="match status" value="1"/>
</dbReference>
<keyword id="KW-0002">3D-structure</keyword>
<keyword id="KW-1015">Disulfide bond</keyword>
<keyword id="KW-0325">Glycoprotein</keyword>
<keyword id="KW-0449">Lipoprotein</keyword>
<keyword id="KW-0472">Membrane</keyword>
<keyword id="KW-0564">Palmitate</keyword>
<keyword id="KW-0732">Signal</keyword>
<keyword id="KW-0812">Transmembrane</keyword>
<keyword id="KW-1133">Transmembrane helix</keyword>
<keyword id="KW-0261">Viral envelope protein</keyword>
<keyword id="KW-0946">Virion</keyword>
<comment type="function">
    <text evidence="1 2">Attaches the virus to host cellular receptor, inducing endocytosis of the virion by using different host proteins including TFRC, GRM2 and ITGB1 (By similarity). In the endosome, the acidic pH induces conformational changes in the glycoprotein trimer, which trigger fusion between virus and cell membrane. There is convincing in vitro evidence that the muscular form of the nicotinic acetylcholine receptor (nAChR), the neuronal cell adhesion molecule (NCAM), and the p75 neurotrophin receptor (p75NTR) bind glycoprotein and thereby facilitate rabies virus entry into cells (By similarity).</text>
</comment>
<comment type="subunit">
    <text evidence="1 2">Homotrimer (By similarity). Interacts with matrix protein (By similarity). Interacts with host TRFC. Interacts with host BST2; this interaction inhibits viral budding by tethering new virions to the cell surface. Interacts with ITGB1. Interacts with host GRM2 (By similarity).</text>
</comment>
<comment type="subcellular location">
    <subcellularLocation>
        <location evidence="6">Virion membrane</location>
        <topology evidence="6">Single-pass type I membrane protein</topology>
    </subcellularLocation>
</comment>
<comment type="PTM">
    <text evidence="4 5">Glycosylated and palmitoylated by host. Glycosylation is crucial for glycoprotein export at the cell surface.</text>
</comment>
<comment type="biotechnology">
    <text>Primary surface antigen capable of inducing and reacting with virus-neutralizing antibodies. Almost all human and veterinary vaccines are based on the functional aspects of the G protein.</text>
</comment>
<comment type="miscellaneous">
    <text>Arg-352 is highly involved in rabies virus pathogenicity. Its mutation dramatically attenuates the virus.</text>
</comment>
<comment type="similarity">
    <text evidence="6">Belongs to the lyssavirus glycoprotein family.</text>
</comment>
<reference key="1">
    <citation type="journal article" date="1981" name="Nature">
        <title>Structure of the glycoprotein gene in rabies virus.</title>
        <authorList>
            <person name="Anilionis A."/>
            <person name="Wunner W.H."/>
            <person name="Curtis P.J."/>
        </authorList>
    </citation>
    <scope>NUCLEOTIDE SEQUENCE [GENOMIC RNA]</scope>
</reference>
<reference key="2">
    <citation type="journal article" date="1982" name="Comp. Immunol. Microbiol. Infect. Dis.">
        <title>Amino acid sequence of the rabies virus glycoprotein deduced from its cloned gene.</title>
        <authorList>
            <person name="Anilionis A."/>
            <person name="Wunner W.H."/>
            <person name="Curtis P.J."/>
        </authorList>
    </citation>
    <scope>NUCLEOTIDE SEQUENCE [GENOMIC RNA]</scope>
</reference>
<reference key="3">
    <citation type="submission" date="2007-01" db="EMBL/GenBank/DDBJ databases">
        <title>Complete nucleotide sequencing of SAD derivatives of attenuated rabies virus vaccine strains.</title>
        <authorList>
            <person name="Geue L."/>
            <person name="Schares S."/>
            <person name="Schnick C."/>
            <person name="Kliemt J."/>
            <person name="Beckert A."/>
            <person name="Hoffmann B."/>
            <person name="Freuling C."/>
            <person name="Marston D."/>
            <person name="McElhinney L."/>
            <person name="Fooks A."/>
            <person name="Zanoni R."/>
            <person name="Peterhans E."/>
            <person name="Cox J.H."/>
            <person name="Mueller T."/>
        </authorList>
    </citation>
    <scope>NUCLEOTIDE SEQUENCE [GENOMIC RNA]</scope>
    <source>
        <strain>ERA 2007</strain>
    </source>
</reference>
<reference key="4">
    <citation type="journal article" date="1985" name="Virology">
        <title>Antigenic variants of CVS rabies virus with altered glycosylation sites.</title>
        <authorList>
            <person name="Wunner W.H."/>
            <person name="Dietzschold B."/>
            <person name="Smith C.L."/>
            <person name="Lafon M."/>
            <person name="Golub E."/>
        </authorList>
    </citation>
    <scope>NUCLEOTIDE SEQUENCE [GENOMIC RNA] OF 49-59; 169-179; 209-226 AND 337-354</scope>
    <source>
        <strain>CVS-11</strain>
        <strain>RV194-2[F3]</strain>
        <strain>RV231-22</strain>
    </source>
</reference>
<reference key="5">
    <citation type="journal article" date="1992" name="J. Biol. Chem.">
        <title>N-linked glycosylation of rabies virus glycoprotein. Individual sequons differ in their glycosylation efficiencies and influence on cell surface expression.</title>
        <authorList>
            <person name="Shakin-Eshleman S.H."/>
            <person name="Remaley A.T."/>
            <person name="Eshleman J.R."/>
            <person name="Wunner W.H."/>
            <person name="Spitalnik S.L."/>
        </authorList>
    </citation>
    <scope>GLYCOSYLATION AT ASN-56; ASN-266 AND ASN-338</scope>
</reference>
<reference key="6">
    <citation type="journal article" date="1998" name="Glycobiology">
        <title>The role of site-specific N-glycosylation in secretion of soluble forms of rabies virus glycoprotein.</title>
        <authorList>
            <person name="Wojczyk B.S."/>
            <person name="Stwora-Wojczyk M."/>
            <person name="Shakin-Eshleman S.H."/>
            <person name="Wunner W.H."/>
            <person name="Spitalnik S.L."/>
        </authorList>
    </citation>
    <scope>GLYCOSYLATION</scope>
</reference>
<reference key="7">
    <citation type="journal article" date="2005" name="J. Neurovirol.">
        <title>Rabies virus receptors.</title>
        <authorList>
            <person name="Lafon M."/>
        </authorList>
    </citation>
    <scope>INTERACTION WITH HOST CELL RECEPTORS</scope>
</reference>
<proteinExistence type="evidence at protein level"/>
<name>GLYCO_RABVE</name>
<accession>P03524</accession>
<accession>A3F5L8</accession>
<gene>
    <name type="primary">G</name>
</gene>